<proteinExistence type="inferred from homology"/>
<accession>Q5LIY8</accession>
<sequence>MRVVIQRVSHASVTIDGHCKSAIQKGMMILVGIEETDSWEDIDWLCKKIVNLRIFDDENGVMNKSILEDEGNILVISQFTLHASTKKGNRPSYIKAAKPEISIPLYEQFCNDLSCALGKEVKTGEFGADMKVELLNDGPVTICIDTKNKE</sequence>
<gene>
    <name evidence="1" type="primary">dtd</name>
    <name type="ordered locus">BF0110</name>
</gene>
<dbReference type="EC" id="3.1.1.96" evidence="1"/>
<dbReference type="EMBL" id="CR626927">
    <property type="protein sequence ID" value="CAH05888.1"/>
    <property type="molecule type" value="Genomic_DNA"/>
</dbReference>
<dbReference type="RefSeq" id="WP_010991910.1">
    <property type="nucleotide sequence ID" value="NC_003228.3"/>
</dbReference>
<dbReference type="SMR" id="Q5LIY8"/>
<dbReference type="PaxDb" id="272559-BF9343_0109"/>
<dbReference type="GeneID" id="60369985"/>
<dbReference type="KEGG" id="bfs:BF9343_0109"/>
<dbReference type="eggNOG" id="COG1490">
    <property type="taxonomic scope" value="Bacteria"/>
</dbReference>
<dbReference type="HOGENOM" id="CLU_076901_1_0_10"/>
<dbReference type="Proteomes" id="UP000006731">
    <property type="component" value="Chromosome"/>
</dbReference>
<dbReference type="GO" id="GO:0005737">
    <property type="term" value="C:cytoplasm"/>
    <property type="evidence" value="ECO:0007669"/>
    <property type="project" value="UniProtKB-SubCell"/>
</dbReference>
<dbReference type="GO" id="GO:0051500">
    <property type="term" value="F:D-tyrosyl-tRNA(Tyr) deacylase activity"/>
    <property type="evidence" value="ECO:0007669"/>
    <property type="project" value="TreeGrafter"/>
</dbReference>
<dbReference type="GO" id="GO:0106026">
    <property type="term" value="F:Gly-tRNA(Ala) deacylase activity"/>
    <property type="evidence" value="ECO:0007669"/>
    <property type="project" value="UniProtKB-UniRule"/>
</dbReference>
<dbReference type="GO" id="GO:0043908">
    <property type="term" value="F:Ser(Gly)-tRNA(Ala) hydrolase activity"/>
    <property type="evidence" value="ECO:0007669"/>
    <property type="project" value="UniProtKB-UniRule"/>
</dbReference>
<dbReference type="GO" id="GO:0000049">
    <property type="term" value="F:tRNA binding"/>
    <property type="evidence" value="ECO:0007669"/>
    <property type="project" value="UniProtKB-UniRule"/>
</dbReference>
<dbReference type="GO" id="GO:0019478">
    <property type="term" value="P:D-amino acid catabolic process"/>
    <property type="evidence" value="ECO:0007669"/>
    <property type="project" value="UniProtKB-UniRule"/>
</dbReference>
<dbReference type="CDD" id="cd00563">
    <property type="entry name" value="Dtyr_deacylase"/>
    <property type="match status" value="1"/>
</dbReference>
<dbReference type="FunFam" id="3.50.80.10:FF:000001">
    <property type="entry name" value="D-aminoacyl-tRNA deacylase"/>
    <property type="match status" value="1"/>
</dbReference>
<dbReference type="Gene3D" id="3.50.80.10">
    <property type="entry name" value="D-tyrosyl-tRNA(Tyr) deacylase"/>
    <property type="match status" value="1"/>
</dbReference>
<dbReference type="HAMAP" id="MF_00518">
    <property type="entry name" value="Deacylase_Dtd"/>
    <property type="match status" value="1"/>
</dbReference>
<dbReference type="InterPro" id="IPR003732">
    <property type="entry name" value="Daa-tRNA_deacyls_DTD"/>
</dbReference>
<dbReference type="InterPro" id="IPR023509">
    <property type="entry name" value="DTD-like_sf"/>
</dbReference>
<dbReference type="NCBIfam" id="TIGR00256">
    <property type="entry name" value="D-aminoacyl-tRNA deacylase"/>
    <property type="match status" value="1"/>
</dbReference>
<dbReference type="PANTHER" id="PTHR10472:SF5">
    <property type="entry name" value="D-AMINOACYL-TRNA DEACYLASE 1"/>
    <property type="match status" value="1"/>
</dbReference>
<dbReference type="PANTHER" id="PTHR10472">
    <property type="entry name" value="D-TYROSYL-TRNA TYR DEACYLASE"/>
    <property type="match status" value="1"/>
</dbReference>
<dbReference type="Pfam" id="PF02580">
    <property type="entry name" value="Tyr_Deacylase"/>
    <property type="match status" value="1"/>
</dbReference>
<dbReference type="SUPFAM" id="SSF69500">
    <property type="entry name" value="DTD-like"/>
    <property type="match status" value="1"/>
</dbReference>
<feature type="chain" id="PRO_0000259263" description="D-aminoacyl-tRNA deacylase">
    <location>
        <begin position="1"/>
        <end position="150"/>
    </location>
</feature>
<feature type="short sequence motif" description="Gly-cisPro motif, important for rejection of L-amino acids" evidence="1">
    <location>
        <begin position="138"/>
        <end position="139"/>
    </location>
</feature>
<evidence type="ECO:0000255" key="1">
    <source>
        <dbReference type="HAMAP-Rule" id="MF_00518"/>
    </source>
</evidence>
<comment type="function">
    <text evidence="1">An aminoacyl-tRNA editing enzyme that deacylates mischarged D-aminoacyl-tRNAs. Also deacylates mischarged glycyl-tRNA(Ala), protecting cells against glycine mischarging by AlaRS. Acts via tRNA-based rather than protein-based catalysis; rejects L-amino acids rather than detecting D-amino acids in the active site. By recycling D-aminoacyl-tRNA to D-amino acids and free tRNA molecules, this enzyme counteracts the toxicity associated with the formation of D-aminoacyl-tRNA entities in vivo and helps enforce protein L-homochirality.</text>
</comment>
<comment type="catalytic activity">
    <reaction evidence="1">
        <text>glycyl-tRNA(Ala) + H2O = tRNA(Ala) + glycine + H(+)</text>
        <dbReference type="Rhea" id="RHEA:53744"/>
        <dbReference type="Rhea" id="RHEA-COMP:9657"/>
        <dbReference type="Rhea" id="RHEA-COMP:13640"/>
        <dbReference type="ChEBI" id="CHEBI:15377"/>
        <dbReference type="ChEBI" id="CHEBI:15378"/>
        <dbReference type="ChEBI" id="CHEBI:57305"/>
        <dbReference type="ChEBI" id="CHEBI:78442"/>
        <dbReference type="ChEBI" id="CHEBI:78522"/>
        <dbReference type="EC" id="3.1.1.96"/>
    </reaction>
</comment>
<comment type="catalytic activity">
    <reaction evidence="1">
        <text>a D-aminoacyl-tRNA + H2O = a tRNA + a D-alpha-amino acid + H(+)</text>
        <dbReference type="Rhea" id="RHEA:13953"/>
        <dbReference type="Rhea" id="RHEA-COMP:10123"/>
        <dbReference type="Rhea" id="RHEA-COMP:10124"/>
        <dbReference type="ChEBI" id="CHEBI:15377"/>
        <dbReference type="ChEBI" id="CHEBI:15378"/>
        <dbReference type="ChEBI" id="CHEBI:59871"/>
        <dbReference type="ChEBI" id="CHEBI:78442"/>
        <dbReference type="ChEBI" id="CHEBI:79333"/>
        <dbReference type="EC" id="3.1.1.96"/>
    </reaction>
</comment>
<comment type="subunit">
    <text evidence="1">Homodimer.</text>
</comment>
<comment type="subcellular location">
    <subcellularLocation>
        <location evidence="1">Cytoplasm</location>
    </subcellularLocation>
</comment>
<comment type="domain">
    <text evidence="1">A Gly-cisPro motif from one monomer fits into the active site of the other monomer to allow specific chiral rejection of L-amino acids.</text>
</comment>
<comment type="similarity">
    <text evidence="1">Belongs to the DTD family.</text>
</comment>
<protein>
    <recommendedName>
        <fullName evidence="1">D-aminoacyl-tRNA deacylase</fullName>
        <shortName evidence="1">DTD</shortName>
        <ecNumber evidence="1">3.1.1.96</ecNumber>
    </recommendedName>
    <alternativeName>
        <fullName evidence="1">Gly-tRNA(Ala) deacylase</fullName>
    </alternativeName>
</protein>
<organism>
    <name type="scientific">Bacteroides fragilis (strain ATCC 25285 / DSM 2151 / CCUG 4856 / JCM 11019 / LMG 10263 / NCTC 9343 / Onslow / VPI 2553 / EN-2)</name>
    <dbReference type="NCBI Taxonomy" id="272559"/>
    <lineage>
        <taxon>Bacteria</taxon>
        <taxon>Pseudomonadati</taxon>
        <taxon>Bacteroidota</taxon>
        <taxon>Bacteroidia</taxon>
        <taxon>Bacteroidales</taxon>
        <taxon>Bacteroidaceae</taxon>
        <taxon>Bacteroides</taxon>
    </lineage>
</organism>
<reference key="1">
    <citation type="journal article" date="2005" name="Science">
        <title>Extensive DNA inversions in the B. fragilis genome control variable gene expression.</title>
        <authorList>
            <person name="Cerdeno-Tarraga A.-M."/>
            <person name="Patrick S."/>
            <person name="Crossman L.C."/>
            <person name="Blakely G."/>
            <person name="Abratt V."/>
            <person name="Lennard N."/>
            <person name="Poxton I."/>
            <person name="Duerden B."/>
            <person name="Harris B."/>
            <person name="Quail M.A."/>
            <person name="Barron A."/>
            <person name="Clark L."/>
            <person name="Corton C."/>
            <person name="Doggett J."/>
            <person name="Holden M.T.G."/>
            <person name="Larke N."/>
            <person name="Line A."/>
            <person name="Lord A."/>
            <person name="Norbertczak H."/>
            <person name="Ormond D."/>
            <person name="Price C."/>
            <person name="Rabbinowitsch E."/>
            <person name="Woodward J."/>
            <person name="Barrell B.G."/>
            <person name="Parkhill J."/>
        </authorList>
    </citation>
    <scope>NUCLEOTIDE SEQUENCE [LARGE SCALE GENOMIC DNA]</scope>
    <source>
        <strain>ATCC 25285 / DSM 2151 / CCUG 4856 / JCM 11019 / LMG 10263 / NCTC 9343 / Onslow / VPI 2553 / EN-2</strain>
    </source>
</reference>
<keyword id="KW-0963">Cytoplasm</keyword>
<keyword id="KW-0378">Hydrolase</keyword>
<keyword id="KW-0694">RNA-binding</keyword>
<keyword id="KW-0820">tRNA-binding</keyword>
<name>DTD_BACFN</name>